<accession>Q1ACG2</accession>
<protein>
    <recommendedName>
        <fullName evidence="2">Large ribosomal subunit protein uL5c</fullName>
    </recommendedName>
    <alternativeName>
        <fullName>50S ribosomal protein L5, chloroplastic</fullName>
    </alternativeName>
</protein>
<name>RK5_CHAVU</name>
<gene>
    <name type="primary">rpl5</name>
</gene>
<reference key="1">
    <citation type="journal article" date="2006" name="Mol. Biol. Evol.">
        <title>The chloroplast genome sequence of Chara vulgaris sheds new light into the closest green algal relatives of land plants.</title>
        <authorList>
            <person name="Turmel M."/>
            <person name="Otis C."/>
            <person name="Lemieux C."/>
        </authorList>
    </citation>
    <scope>NUCLEOTIDE SEQUENCE [LARGE SCALE GENOMIC DNA]</scope>
</reference>
<feature type="chain" id="PRO_0000276577" description="Large ribosomal subunit protein uL5c">
    <location>
        <begin position="1"/>
        <end position="189"/>
    </location>
</feature>
<sequence>MIQRLKKFYLDNVVPDLYQKFEYTNIHQLPYLKKIVINCGFGEASQNSKFLEGTIKDLSIIASQKPIVTRARKAIAGFQIRKKMPVGVCVTLRGETMYAFLDRLIHLALPRIKDFQGLNWKSFDGYGNFHFGIREQLIFPEIHYDKIDKIRGMNISIITSCHTDTEALHFLTSLGIPFDSRDSFSTQER</sequence>
<evidence type="ECO:0000250" key="1"/>
<evidence type="ECO:0000305" key="2"/>
<dbReference type="EMBL" id="DQ229107">
    <property type="protein sequence ID" value="ABA61982.1"/>
    <property type="molecule type" value="Genomic_DNA"/>
</dbReference>
<dbReference type="RefSeq" id="YP_635785.1">
    <property type="nucleotide sequence ID" value="NC_008097.1"/>
</dbReference>
<dbReference type="SMR" id="Q1ACG2"/>
<dbReference type="GeneID" id="4100252"/>
<dbReference type="GO" id="GO:0009507">
    <property type="term" value="C:chloroplast"/>
    <property type="evidence" value="ECO:0007669"/>
    <property type="project" value="UniProtKB-SubCell"/>
</dbReference>
<dbReference type="GO" id="GO:1990904">
    <property type="term" value="C:ribonucleoprotein complex"/>
    <property type="evidence" value="ECO:0007669"/>
    <property type="project" value="UniProtKB-KW"/>
</dbReference>
<dbReference type="GO" id="GO:0005840">
    <property type="term" value="C:ribosome"/>
    <property type="evidence" value="ECO:0007669"/>
    <property type="project" value="UniProtKB-KW"/>
</dbReference>
<dbReference type="GO" id="GO:0019843">
    <property type="term" value="F:rRNA binding"/>
    <property type="evidence" value="ECO:0007669"/>
    <property type="project" value="UniProtKB-UniRule"/>
</dbReference>
<dbReference type="GO" id="GO:0003735">
    <property type="term" value="F:structural constituent of ribosome"/>
    <property type="evidence" value="ECO:0007669"/>
    <property type="project" value="InterPro"/>
</dbReference>
<dbReference type="GO" id="GO:0006412">
    <property type="term" value="P:translation"/>
    <property type="evidence" value="ECO:0007669"/>
    <property type="project" value="UniProtKB-UniRule"/>
</dbReference>
<dbReference type="FunFam" id="3.30.1440.10:FF:000001">
    <property type="entry name" value="50S ribosomal protein L5"/>
    <property type="match status" value="1"/>
</dbReference>
<dbReference type="Gene3D" id="3.30.1440.10">
    <property type="match status" value="1"/>
</dbReference>
<dbReference type="HAMAP" id="MF_01333_B">
    <property type="entry name" value="Ribosomal_uL5_B"/>
    <property type="match status" value="1"/>
</dbReference>
<dbReference type="InterPro" id="IPR002132">
    <property type="entry name" value="Ribosomal_uL5"/>
</dbReference>
<dbReference type="InterPro" id="IPR020930">
    <property type="entry name" value="Ribosomal_uL5_bac-type"/>
</dbReference>
<dbReference type="InterPro" id="IPR031309">
    <property type="entry name" value="Ribosomal_uL5_C"/>
</dbReference>
<dbReference type="InterPro" id="IPR022803">
    <property type="entry name" value="Ribosomal_uL5_dom_sf"/>
</dbReference>
<dbReference type="InterPro" id="IPR031310">
    <property type="entry name" value="Ribosomal_uL5_N"/>
</dbReference>
<dbReference type="NCBIfam" id="NF000585">
    <property type="entry name" value="PRK00010.1"/>
    <property type="match status" value="1"/>
</dbReference>
<dbReference type="PANTHER" id="PTHR11994">
    <property type="entry name" value="60S RIBOSOMAL PROTEIN L11-RELATED"/>
    <property type="match status" value="1"/>
</dbReference>
<dbReference type="Pfam" id="PF00281">
    <property type="entry name" value="Ribosomal_L5"/>
    <property type="match status" value="1"/>
</dbReference>
<dbReference type="Pfam" id="PF00673">
    <property type="entry name" value="Ribosomal_L5_C"/>
    <property type="match status" value="1"/>
</dbReference>
<dbReference type="PIRSF" id="PIRSF002161">
    <property type="entry name" value="Ribosomal_L5"/>
    <property type="match status" value="1"/>
</dbReference>
<dbReference type="SUPFAM" id="SSF55282">
    <property type="entry name" value="RL5-like"/>
    <property type="match status" value="1"/>
</dbReference>
<comment type="function">
    <text evidence="1">Binds 5S rRNA, forms part of the central protuberance of the 50S subunit.</text>
</comment>
<comment type="subunit">
    <text evidence="1">Part of the 50S ribosomal subunit; contacts the 5S rRNA.</text>
</comment>
<comment type="subcellular location">
    <subcellularLocation>
        <location>Plastid</location>
        <location>Chloroplast</location>
    </subcellularLocation>
</comment>
<comment type="similarity">
    <text evidence="2">Belongs to the universal ribosomal protein uL5 family.</text>
</comment>
<organism>
    <name type="scientific">Chara vulgaris</name>
    <name type="common">Common stonewort</name>
    <dbReference type="NCBI Taxonomy" id="55564"/>
    <lineage>
        <taxon>Eukaryota</taxon>
        <taxon>Viridiplantae</taxon>
        <taxon>Streptophyta</taxon>
        <taxon>Charophyceae</taxon>
        <taxon>Charales</taxon>
        <taxon>Characeae</taxon>
        <taxon>Chara</taxon>
    </lineage>
</organism>
<keyword id="KW-0150">Chloroplast</keyword>
<keyword id="KW-0934">Plastid</keyword>
<keyword id="KW-0687">Ribonucleoprotein</keyword>
<keyword id="KW-0689">Ribosomal protein</keyword>
<keyword id="KW-0694">RNA-binding</keyword>
<keyword id="KW-0699">rRNA-binding</keyword>
<proteinExistence type="inferred from homology"/>
<geneLocation type="chloroplast"/>